<organism>
    <name type="scientific">Drosophila simulans</name>
    <name type="common">Fruit fly</name>
    <dbReference type="NCBI Taxonomy" id="7240"/>
    <lineage>
        <taxon>Eukaryota</taxon>
        <taxon>Metazoa</taxon>
        <taxon>Ecdysozoa</taxon>
        <taxon>Arthropoda</taxon>
        <taxon>Hexapoda</taxon>
        <taxon>Insecta</taxon>
        <taxon>Pterygota</taxon>
        <taxon>Neoptera</taxon>
        <taxon>Endopterygota</taxon>
        <taxon>Diptera</taxon>
        <taxon>Brachycera</taxon>
        <taxon>Muscomorpha</taxon>
        <taxon>Ephydroidea</taxon>
        <taxon>Drosophilidae</taxon>
        <taxon>Drosophila</taxon>
        <taxon>Sophophora</taxon>
    </lineage>
</organism>
<keyword id="KW-0866">Nonsense-mediated mRNA decay</keyword>
<keyword id="KW-1185">Reference proteome</keyword>
<reference key="1">
    <citation type="journal article" date="2007" name="Nature">
        <title>Evolution of genes and genomes on the Drosophila phylogeny.</title>
        <authorList>
            <consortium name="Drosophila 12 genomes consortium"/>
        </authorList>
    </citation>
    <scope>NUCLEOTIDE SEQUENCE [LARGE SCALE GENOMIC DNA]</scope>
</reference>
<gene>
    <name type="ORF">GD22229</name>
</gene>
<proteinExistence type="inferred from homology"/>
<dbReference type="EMBL" id="CM000361">
    <property type="protein sequence ID" value="EDX04599.1"/>
    <property type="molecule type" value="Genomic_DNA"/>
</dbReference>
<dbReference type="SMR" id="B4Q9T2"/>
<dbReference type="STRING" id="7240.B4Q9T2"/>
<dbReference type="HOGENOM" id="CLU_008116_0_0_1"/>
<dbReference type="OMA" id="HVCHIVV"/>
<dbReference type="OrthoDB" id="63589at2759"/>
<dbReference type="PhylomeDB" id="B4Q9T2"/>
<dbReference type="Proteomes" id="UP000000304">
    <property type="component" value="Chromosome 2L"/>
</dbReference>
<dbReference type="GO" id="GO:0000184">
    <property type="term" value="P:nuclear-transcribed mRNA catabolic process, nonsense-mediated decay"/>
    <property type="evidence" value="ECO:0000250"/>
    <property type="project" value="UniProtKB"/>
</dbReference>
<dbReference type="InterPro" id="IPR019354">
    <property type="entry name" value="SMG8-like"/>
</dbReference>
<dbReference type="PANTHER" id="PTHR13091">
    <property type="entry name" value="AMPLIFIED IN BREAST CANCER 2-RELATED"/>
    <property type="match status" value="1"/>
</dbReference>
<dbReference type="PANTHER" id="PTHR13091:SF0">
    <property type="entry name" value="NONSENSE-MEDIATED MRNA DECAY FACTOR SMG8"/>
    <property type="match status" value="1"/>
</dbReference>
<dbReference type="Pfam" id="PF10220">
    <property type="entry name" value="Smg8_Smg9"/>
    <property type="match status" value="1"/>
</dbReference>
<accession>B4Q9T2</accession>
<name>SMG8_DROSI</name>
<feature type="chain" id="PRO_0000378179" description="Nonsense-mediated mRNA decay factor SMG8">
    <location>
        <begin position="1"/>
        <end position="944"/>
    </location>
</feature>
<feature type="region of interest" description="Disordered" evidence="3">
    <location>
        <begin position="560"/>
        <end position="597"/>
    </location>
</feature>
<feature type="region of interest" description="Disordered" evidence="3">
    <location>
        <begin position="628"/>
        <end position="653"/>
    </location>
</feature>
<feature type="compositionally biased region" description="Acidic residues" evidence="3">
    <location>
        <begin position="568"/>
        <end position="583"/>
    </location>
</feature>
<feature type="compositionally biased region" description="Polar residues" evidence="3">
    <location>
        <begin position="628"/>
        <end position="650"/>
    </location>
</feature>
<comment type="function">
    <text evidence="1">Involved in nonsense-mediated decay (NMD) of mRNAs containing premature stop codons. Probable component of kinase complex containing nonC and recruited to stalled ribosomes (By similarity).</text>
</comment>
<comment type="similarity">
    <text evidence="4">Belongs to the SMG8 family.</text>
</comment>
<evidence type="ECO:0000250" key="1"/>
<evidence type="ECO:0000250" key="2">
    <source>
        <dbReference type="UniProtKB" id="Q8ND04"/>
    </source>
</evidence>
<evidence type="ECO:0000256" key="3">
    <source>
        <dbReference type="SAM" id="MobiDB-lite"/>
    </source>
</evidence>
<evidence type="ECO:0000305" key="4"/>
<sequence length="944" mass="106712">MLDDYYTWTYPDIPENVAQELLQLNGSLVVVGVVGRSDCDLANKMLAFGMEPPDDHTPEDGQIQCYYKPGTFSLLLHFESTYDAEISGQMIDVCIEDVDTPFDIDSFFERIRCRFVRMMLLALHVCHIVVYVENGLTFDPTLLTVFQLAKFAREQHLMQFLPQMLRETPAARISERTRLCAPRILFLFENFPGDEPKTRESVSTCEFQMEDCIYELLGRYNIVTNSSSNSLVALPNNKQFVFFNAHEELRDDKLLKAIDCLNETMYKPDLKEEEEDLEILAMAPFDGFVKPFTMPVYEKEWENLQYQEDHTVWNFLQRHVQDALVGCFDAGSFKQHAQQGPFQLLNSQEWHDCMATMHKLLVENAKDPDHETSNEEYKLFLKNFDEDLNYEKKFWAHLCELGLKKGIAAYKNAAPANYGTATHRQLLADATLAFEEEGRGPQAQAALAKLAAICHNHWEDGRQQCELLSLRSHPCTLPKNMPHEKHNSGVIHISTCNCGRTQGRREDPFNLRQANYEFYELIAQMCNLCVKVKQYQFPIFEPSVSDYRAAAFEAAFPLLNTGKSGAPQDEDAGEDEAEEEEGQERELPTKKKLQNTASNCCSHPLSPTFGSDLNMSIAGFGASLKESQASSEQLSNSEQNTTSSGTSSADTENELVVELQEPAKKEAREDVGPTDAVSTSTTEYLPGLVHTVSNFGLLPLFPSWSLACVGPSSIYSHNTGLQEHFQSGFLSGANFLLPWDVQLRLVHALKQQYQQQHHGKKQQRWKKQGDRLSLKIFVGMEYECSRGHRFMMCAPDRVLRGGADIERDTCSKVVHNNMPLYYPCPCRSQRNFLAQLMRIHVVTPKAPVNIIVDPKVCVGRYTFTLGSIVPPRLSQSAYWIIRLPYVYQGDDVLIAPPDHLDPDYPLAGGYLLPGMFGVVETDPTLDLNEPGMMGASAAGNFTRI</sequence>
<protein>
    <recommendedName>
        <fullName evidence="2">Nonsense-mediated mRNA decay factor SMG8</fullName>
    </recommendedName>
    <alternativeName>
        <fullName>Protein smg-8 homolog</fullName>
    </alternativeName>
</protein>